<protein>
    <recommendedName>
        <fullName evidence="1">ATP-dependent Clp protease ATP-binding subunit ClpX</fullName>
    </recommendedName>
</protein>
<reference key="1">
    <citation type="submission" date="2006-05" db="EMBL/GenBank/DDBJ databases">
        <title>Complete sequence of chromosome 3 of Burkholderia cenocepacia AU 1054.</title>
        <authorList>
            <consortium name="US DOE Joint Genome Institute"/>
            <person name="Copeland A."/>
            <person name="Lucas S."/>
            <person name="Lapidus A."/>
            <person name="Barry K."/>
            <person name="Detter J.C."/>
            <person name="Glavina del Rio T."/>
            <person name="Hammon N."/>
            <person name="Israni S."/>
            <person name="Dalin E."/>
            <person name="Tice H."/>
            <person name="Pitluck S."/>
            <person name="Chain P."/>
            <person name="Malfatti S."/>
            <person name="Shin M."/>
            <person name="Vergez L."/>
            <person name="Schmutz J."/>
            <person name="Larimer F."/>
            <person name="Land M."/>
            <person name="Hauser L."/>
            <person name="Kyrpides N."/>
            <person name="Lykidis A."/>
            <person name="LiPuma J.J."/>
            <person name="Konstantinidis K."/>
            <person name="Tiedje J.M."/>
            <person name="Richardson P."/>
        </authorList>
    </citation>
    <scope>NUCLEOTIDE SEQUENCE [LARGE SCALE GENOMIC DNA]</scope>
    <source>
        <strain>AU 1054</strain>
    </source>
</reference>
<sequence>MADKKGSNSEKLLYCSFCGKSQHEVKKLIAGPSVFICDECIDLCNEIIRDEAAAAGVEASLSRSDLPSPQEIRDILDQYVIGQERAKKILAVAVYNHYKRLKHLDKKDDVELSKSNILLIGPTGSGKTLLAQTLARLLNVPFVIADATTLTEAGYVGEDVENIIQKLLQNCNYEVDKAQRGIVYIDEIDKISRKSDNPSITRDVSGEGVQQALLKLVEGTMASVPPQGGRKHPNQDFIQVDTTNILFICGGAFDGLEKVITDRTEKTGIGFGATVKSKQERDAGEVLRETEPEDLIKFGLIPELIGRLPVVATLGKLDEAALMKILVEPKNALVKQYHKLFAMERVELEIRPGALQAVARKAIRRKTGARGLRSIIEQALLDVMYELPTMKGVSKVIIDENVIDGDGKPLLIYEDTPKVAGSN</sequence>
<gene>
    <name evidence="1" type="primary">clpX</name>
    <name type="ordered locus">Bcen_6157</name>
</gene>
<proteinExistence type="inferred from homology"/>
<feature type="chain" id="PRO_1000024525" description="ATP-dependent Clp protease ATP-binding subunit ClpX">
    <location>
        <begin position="1"/>
        <end position="423"/>
    </location>
</feature>
<feature type="domain" description="ClpX-type ZB" evidence="2">
    <location>
        <begin position="3"/>
        <end position="56"/>
    </location>
</feature>
<feature type="binding site" evidence="2">
    <location>
        <position position="15"/>
    </location>
    <ligand>
        <name>Zn(2+)</name>
        <dbReference type="ChEBI" id="CHEBI:29105"/>
    </ligand>
</feature>
<feature type="binding site" evidence="2">
    <location>
        <position position="18"/>
    </location>
    <ligand>
        <name>Zn(2+)</name>
        <dbReference type="ChEBI" id="CHEBI:29105"/>
    </ligand>
</feature>
<feature type="binding site" evidence="2">
    <location>
        <position position="37"/>
    </location>
    <ligand>
        <name>Zn(2+)</name>
        <dbReference type="ChEBI" id="CHEBI:29105"/>
    </ligand>
</feature>
<feature type="binding site" evidence="2">
    <location>
        <position position="40"/>
    </location>
    <ligand>
        <name>Zn(2+)</name>
        <dbReference type="ChEBI" id="CHEBI:29105"/>
    </ligand>
</feature>
<feature type="binding site" evidence="1">
    <location>
        <begin position="122"/>
        <end position="129"/>
    </location>
    <ligand>
        <name>ATP</name>
        <dbReference type="ChEBI" id="CHEBI:30616"/>
    </ligand>
</feature>
<comment type="function">
    <text evidence="1">ATP-dependent specificity component of the Clp protease. It directs the protease to specific substrates. Can perform chaperone functions in the absence of ClpP.</text>
</comment>
<comment type="subunit">
    <text evidence="1">Component of the ClpX-ClpP complex. Forms a hexameric ring that, in the presence of ATP, binds to fourteen ClpP subunits assembled into a disk-like structure with a central cavity, resembling the structure of eukaryotic proteasomes.</text>
</comment>
<comment type="similarity">
    <text evidence="1">Belongs to the ClpX chaperone family.</text>
</comment>
<organism>
    <name type="scientific">Burkholderia orbicola (strain AU 1054)</name>
    <dbReference type="NCBI Taxonomy" id="331271"/>
    <lineage>
        <taxon>Bacteria</taxon>
        <taxon>Pseudomonadati</taxon>
        <taxon>Pseudomonadota</taxon>
        <taxon>Betaproteobacteria</taxon>
        <taxon>Burkholderiales</taxon>
        <taxon>Burkholderiaceae</taxon>
        <taxon>Burkholderia</taxon>
        <taxon>Burkholderia cepacia complex</taxon>
        <taxon>Burkholderia orbicola</taxon>
    </lineage>
</organism>
<name>CLPX_BURO1</name>
<accession>Q1BH84</accession>
<keyword id="KW-0067">ATP-binding</keyword>
<keyword id="KW-0143">Chaperone</keyword>
<keyword id="KW-0479">Metal-binding</keyword>
<keyword id="KW-0547">Nucleotide-binding</keyword>
<keyword id="KW-0862">Zinc</keyword>
<evidence type="ECO:0000255" key="1">
    <source>
        <dbReference type="HAMAP-Rule" id="MF_00175"/>
    </source>
</evidence>
<evidence type="ECO:0000255" key="2">
    <source>
        <dbReference type="PROSITE-ProRule" id="PRU01250"/>
    </source>
</evidence>
<dbReference type="EMBL" id="CP000380">
    <property type="protein sequence ID" value="ABF81021.1"/>
    <property type="molecule type" value="Genomic_DNA"/>
</dbReference>
<dbReference type="SMR" id="Q1BH84"/>
<dbReference type="HOGENOM" id="CLU_014218_8_2_4"/>
<dbReference type="GO" id="GO:0009376">
    <property type="term" value="C:HslUV protease complex"/>
    <property type="evidence" value="ECO:0007669"/>
    <property type="project" value="TreeGrafter"/>
</dbReference>
<dbReference type="GO" id="GO:0005524">
    <property type="term" value="F:ATP binding"/>
    <property type="evidence" value="ECO:0007669"/>
    <property type="project" value="UniProtKB-UniRule"/>
</dbReference>
<dbReference type="GO" id="GO:0016887">
    <property type="term" value="F:ATP hydrolysis activity"/>
    <property type="evidence" value="ECO:0007669"/>
    <property type="project" value="InterPro"/>
</dbReference>
<dbReference type="GO" id="GO:0140662">
    <property type="term" value="F:ATP-dependent protein folding chaperone"/>
    <property type="evidence" value="ECO:0007669"/>
    <property type="project" value="InterPro"/>
</dbReference>
<dbReference type="GO" id="GO:0046983">
    <property type="term" value="F:protein dimerization activity"/>
    <property type="evidence" value="ECO:0007669"/>
    <property type="project" value="InterPro"/>
</dbReference>
<dbReference type="GO" id="GO:0051082">
    <property type="term" value="F:unfolded protein binding"/>
    <property type="evidence" value="ECO:0007669"/>
    <property type="project" value="UniProtKB-UniRule"/>
</dbReference>
<dbReference type="GO" id="GO:0008270">
    <property type="term" value="F:zinc ion binding"/>
    <property type="evidence" value="ECO:0007669"/>
    <property type="project" value="InterPro"/>
</dbReference>
<dbReference type="GO" id="GO:0051301">
    <property type="term" value="P:cell division"/>
    <property type="evidence" value="ECO:0007669"/>
    <property type="project" value="TreeGrafter"/>
</dbReference>
<dbReference type="GO" id="GO:0051603">
    <property type="term" value="P:proteolysis involved in protein catabolic process"/>
    <property type="evidence" value="ECO:0007669"/>
    <property type="project" value="TreeGrafter"/>
</dbReference>
<dbReference type="CDD" id="cd19497">
    <property type="entry name" value="RecA-like_ClpX"/>
    <property type="match status" value="1"/>
</dbReference>
<dbReference type="FunFam" id="1.10.8.60:FF:000002">
    <property type="entry name" value="ATP-dependent Clp protease ATP-binding subunit ClpX"/>
    <property type="match status" value="1"/>
</dbReference>
<dbReference type="FunFam" id="3.40.50.300:FF:000005">
    <property type="entry name" value="ATP-dependent Clp protease ATP-binding subunit ClpX"/>
    <property type="match status" value="1"/>
</dbReference>
<dbReference type="Gene3D" id="1.10.8.60">
    <property type="match status" value="1"/>
</dbReference>
<dbReference type="Gene3D" id="6.20.220.10">
    <property type="entry name" value="ClpX chaperone, C4-type zinc finger domain"/>
    <property type="match status" value="1"/>
</dbReference>
<dbReference type="Gene3D" id="3.40.50.300">
    <property type="entry name" value="P-loop containing nucleotide triphosphate hydrolases"/>
    <property type="match status" value="1"/>
</dbReference>
<dbReference type="HAMAP" id="MF_00175">
    <property type="entry name" value="ClpX"/>
    <property type="match status" value="1"/>
</dbReference>
<dbReference type="InterPro" id="IPR003593">
    <property type="entry name" value="AAA+_ATPase"/>
</dbReference>
<dbReference type="InterPro" id="IPR050052">
    <property type="entry name" value="ATP-dep_Clp_protease_ClpX"/>
</dbReference>
<dbReference type="InterPro" id="IPR003959">
    <property type="entry name" value="ATPase_AAA_core"/>
</dbReference>
<dbReference type="InterPro" id="IPR019489">
    <property type="entry name" value="Clp_ATPase_C"/>
</dbReference>
<dbReference type="InterPro" id="IPR004487">
    <property type="entry name" value="Clp_protease_ATP-bd_su_ClpX"/>
</dbReference>
<dbReference type="InterPro" id="IPR046425">
    <property type="entry name" value="ClpX_bact"/>
</dbReference>
<dbReference type="InterPro" id="IPR027417">
    <property type="entry name" value="P-loop_NTPase"/>
</dbReference>
<dbReference type="InterPro" id="IPR010603">
    <property type="entry name" value="Znf_CppX_C4"/>
</dbReference>
<dbReference type="InterPro" id="IPR038366">
    <property type="entry name" value="Znf_CppX_C4_sf"/>
</dbReference>
<dbReference type="NCBIfam" id="TIGR00382">
    <property type="entry name" value="clpX"/>
    <property type="match status" value="1"/>
</dbReference>
<dbReference type="NCBIfam" id="NF003745">
    <property type="entry name" value="PRK05342.1"/>
    <property type="match status" value="1"/>
</dbReference>
<dbReference type="PANTHER" id="PTHR48102:SF7">
    <property type="entry name" value="ATP-DEPENDENT CLP PROTEASE ATP-BINDING SUBUNIT CLPX-LIKE, MITOCHONDRIAL"/>
    <property type="match status" value="1"/>
</dbReference>
<dbReference type="PANTHER" id="PTHR48102">
    <property type="entry name" value="ATP-DEPENDENT CLP PROTEASE ATP-BINDING SUBUNIT CLPX-LIKE, MITOCHONDRIAL-RELATED"/>
    <property type="match status" value="1"/>
</dbReference>
<dbReference type="Pfam" id="PF07724">
    <property type="entry name" value="AAA_2"/>
    <property type="match status" value="1"/>
</dbReference>
<dbReference type="Pfam" id="PF10431">
    <property type="entry name" value="ClpB_D2-small"/>
    <property type="match status" value="1"/>
</dbReference>
<dbReference type="Pfam" id="PF06689">
    <property type="entry name" value="zf-C4_ClpX"/>
    <property type="match status" value="1"/>
</dbReference>
<dbReference type="SMART" id="SM00382">
    <property type="entry name" value="AAA"/>
    <property type="match status" value="1"/>
</dbReference>
<dbReference type="SMART" id="SM01086">
    <property type="entry name" value="ClpB_D2-small"/>
    <property type="match status" value="1"/>
</dbReference>
<dbReference type="SMART" id="SM00994">
    <property type="entry name" value="zf-C4_ClpX"/>
    <property type="match status" value="1"/>
</dbReference>
<dbReference type="SUPFAM" id="SSF57716">
    <property type="entry name" value="Glucocorticoid receptor-like (DNA-binding domain)"/>
    <property type="match status" value="1"/>
</dbReference>
<dbReference type="SUPFAM" id="SSF52540">
    <property type="entry name" value="P-loop containing nucleoside triphosphate hydrolases"/>
    <property type="match status" value="1"/>
</dbReference>
<dbReference type="PROSITE" id="PS51902">
    <property type="entry name" value="CLPX_ZB"/>
    <property type="match status" value="1"/>
</dbReference>